<feature type="chain" id="PRO_0000262189" description="Phosphatidylserine decarboxylase beta chain" evidence="1">
    <location>
        <begin position="1"/>
        <end position="189"/>
    </location>
</feature>
<feature type="chain" id="PRO_0000262190" description="Phosphatidylserine decarboxylase alpha chain" evidence="1">
    <location>
        <begin position="190"/>
        <end position="232"/>
    </location>
</feature>
<feature type="active site" description="Schiff-base intermediate with substrate; via pyruvic acid" evidence="1">
    <location>
        <position position="190"/>
    </location>
</feature>
<feature type="site" description="Cleavage (non-hydrolytic); by autocatalysis" evidence="1">
    <location>
        <begin position="189"/>
        <end position="190"/>
    </location>
</feature>
<feature type="modified residue" description="Pyruvic acid (Ser); by autocatalysis" evidence="1">
    <location>
        <position position="190"/>
    </location>
</feature>
<reference key="1">
    <citation type="journal article" date="2005" name="Infect. Immun.">
        <title>Whole-genome analyses of speciation events in pathogenic Brucellae.</title>
        <authorList>
            <person name="Chain P.S."/>
            <person name="Comerci D.J."/>
            <person name="Tolmasky M.E."/>
            <person name="Larimer F.W."/>
            <person name="Malfatti S.A."/>
            <person name="Vergez L.M."/>
            <person name="Aguero F."/>
            <person name="Land M.L."/>
            <person name="Ugalde R.A."/>
            <person name="Garcia E."/>
        </authorList>
    </citation>
    <scope>NUCLEOTIDE SEQUENCE [LARGE SCALE GENOMIC DNA]</scope>
    <source>
        <strain>2308</strain>
    </source>
</reference>
<gene>
    <name evidence="1" type="primary">psd</name>
    <name type="ordered locus">BAB1_0469</name>
</gene>
<proteinExistence type="inferred from homology"/>
<comment type="function">
    <text evidence="1">Catalyzes the formation of phosphatidylethanolamine (PtdEtn) from phosphatidylserine (PtdSer).</text>
</comment>
<comment type="catalytic activity">
    <reaction evidence="1">
        <text>a 1,2-diacyl-sn-glycero-3-phospho-L-serine + H(+) = a 1,2-diacyl-sn-glycero-3-phosphoethanolamine + CO2</text>
        <dbReference type="Rhea" id="RHEA:20828"/>
        <dbReference type="ChEBI" id="CHEBI:15378"/>
        <dbReference type="ChEBI" id="CHEBI:16526"/>
        <dbReference type="ChEBI" id="CHEBI:57262"/>
        <dbReference type="ChEBI" id="CHEBI:64612"/>
        <dbReference type="EC" id="4.1.1.65"/>
    </reaction>
</comment>
<comment type="cofactor">
    <cofactor evidence="1">
        <name>pyruvate</name>
        <dbReference type="ChEBI" id="CHEBI:15361"/>
    </cofactor>
    <text evidence="1">Binds 1 pyruvoyl group covalently per subunit.</text>
</comment>
<comment type="pathway">
    <text evidence="1">Phospholipid metabolism; phosphatidylethanolamine biosynthesis; phosphatidylethanolamine from CDP-diacylglycerol: step 2/2.</text>
</comment>
<comment type="subunit">
    <text evidence="1">Heterodimer of a large membrane-associated beta subunit and a small pyruvoyl-containing alpha subunit.</text>
</comment>
<comment type="subcellular location">
    <subcellularLocation>
        <location evidence="1">Cell membrane</location>
        <topology evidence="1">Peripheral membrane protein</topology>
    </subcellularLocation>
</comment>
<comment type="PTM">
    <text evidence="1">Is synthesized initially as an inactive proenzyme. Formation of the active enzyme involves a self-maturation process in which the active site pyruvoyl group is generated from an internal serine residue via an autocatalytic post-translational modification. Two non-identical subunits are generated from the proenzyme in this reaction, and the pyruvate is formed at the N-terminus of the alpha chain, which is derived from the carboxyl end of the proenzyme. The post-translation cleavage follows an unusual pathway, termed non-hydrolytic serinolysis, in which the side chain hydroxyl group of the serine supplies its oxygen atom to form the C-terminus of the beta chain, while the remainder of the serine residue undergoes an oxidative deamination to produce ammonia and the pyruvoyl prosthetic group on the alpha chain.</text>
</comment>
<comment type="similarity">
    <text evidence="1">Belongs to the phosphatidylserine decarboxylase family. PSD-A subfamily.</text>
</comment>
<sequence length="232" mass="25808">MSLTDTIRNTFVPIHREGYPFIAGFFVVSLILGWLWDPLFWIGMVLTVWCIYFYRDPERVTPMDDDLVISPADGKVSFVGLAVPPAELDLGYEPMTRVSVFMNVFSVHINRSPVRGKIDKVVHRPGKFLNAELDKASTENERNSVLIESPHGKIGVVQIAGLVARRIVCWSNQDDELSVGERFGLIRFGSRVDVYLPSDATVRVAVGQTAIAGETVLADYGTERGEPVVRIA</sequence>
<protein>
    <recommendedName>
        <fullName evidence="1">Phosphatidylserine decarboxylase proenzyme</fullName>
        <ecNumber evidence="1">4.1.1.65</ecNumber>
    </recommendedName>
    <component>
        <recommendedName>
            <fullName evidence="1">Phosphatidylserine decarboxylase alpha chain</fullName>
        </recommendedName>
    </component>
    <component>
        <recommendedName>
            <fullName evidence="1">Phosphatidylserine decarboxylase beta chain</fullName>
        </recommendedName>
    </component>
</protein>
<dbReference type="EC" id="4.1.1.65" evidence="1"/>
<dbReference type="EMBL" id="AM040264">
    <property type="protein sequence ID" value="CAJ10425.1"/>
    <property type="molecule type" value="Genomic_DNA"/>
</dbReference>
<dbReference type="STRING" id="359391.BAB1_0469"/>
<dbReference type="KEGG" id="bmf:BAB1_0469"/>
<dbReference type="PATRIC" id="fig|359391.11.peg.2509"/>
<dbReference type="HOGENOM" id="CLU_072492_0_0_5"/>
<dbReference type="PhylomeDB" id="Q2YMI0"/>
<dbReference type="UniPathway" id="UPA00558">
    <property type="reaction ID" value="UER00616"/>
</dbReference>
<dbReference type="Proteomes" id="UP000002719">
    <property type="component" value="Chromosome I"/>
</dbReference>
<dbReference type="GO" id="GO:0005886">
    <property type="term" value="C:plasma membrane"/>
    <property type="evidence" value="ECO:0007669"/>
    <property type="project" value="UniProtKB-SubCell"/>
</dbReference>
<dbReference type="GO" id="GO:0004609">
    <property type="term" value="F:phosphatidylserine decarboxylase activity"/>
    <property type="evidence" value="ECO:0007669"/>
    <property type="project" value="UniProtKB-UniRule"/>
</dbReference>
<dbReference type="GO" id="GO:0006646">
    <property type="term" value="P:phosphatidylethanolamine biosynthetic process"/>
    <property type="evidence" value="ECO:0007669"/>
    <property type="project" value="UniProtKB-UniRule"/>
</dbReference>
<dbReference type="HAMAP" id="MF_00664">
    <property type="entry name" value="PS_decarb_PSD_A"/>
    <property type="match status" value="1"/>
</dbReference>
<dbReference type="InterPro" id="IPR003817">
    <property type="entry name" value="PS_Dcarbxylase"/>
</dbReference>
<dbReference type="InterPro" id="IPR033175">
    <property type="entry name" value="PSD-A"/>
</dbReference>
<dbReference type="NCBIfam" id="NF003677">
    <property type="entry name" value="PRK05305.1-1"/>
    <property type="match status" value="1"/>
</dbReference>
<dbReference type="NCBIfam" id="NF003678">
    <property type="entry name" value="PRK05305.1-2"/>
    <property type="match status" value="1"/>
</dbReference>
<dbReference type="NCBIfam" id="NF003679">
    <property type="entry name" value="PRK05305.1-3"/>
    <property type="match status" value="1"/>
</dbReference>
<dbReference type="NCBIfam" id="NF003685">
    <property type="entry name" value="PRK05305.2-5"/>
    <property type="match status" value="1"/>
</dbReference>
<dbReference type="PANTHER" id="PTHR35809">
    <property type="entry name" value="ARCHAETIDYLSERINE DECARBOXYLASE PROENZYME-RELATED"/>
    <property type="match status" value="1"/>
</dbReference>
<dbReference type="PANTHER" id="PTHR35809:SF1">
    <property type="entry name" value="ARCHAETIDYLSERINE DECARBOXYLASE PROENZYME-RELATED"/>
    <property type="match status" value="1"/>
</dbReference>
<dbReference type="Pfam" id="PF02666">
    <property type="entry name" value="PS_Dcarbxylase"/>
    <property type="match status" value="1"/>
</dbReference>
<keyword id="KW-1003">Cell membrane</keyword>
<keyword id="KW-0210">Decarboxylase</keyword>
<keyword id="KW-0444">Lipid biosynthesis</keyword>
<keyword id="KW-0443">Lipid metabolism</keyword>
<keyword id="KW-0456">Lyase</keyword>
<keyword id="KW-0472">Membrane</keyword>
<keyword id="KW-0594">Phospholipid biosynthesis</keyword>
<keyword id="KW-1208">Phospholipid metabolism</keyword>
<keyword id="KW-0670">Pyruvate</keyword>
<keyword id="KW-1185">Reference proteome</keyword>
<keyword id="KW-0865">Zymogen</keyword>
<organism>
    <name type="scientific">Brucella abortus (strain 2308)</name>
    <dbReference type="NCBI Taxonomy" id="359391"/>
    <lineage>
        <taxon>Bacteria</taxon>
        <taxon>Pseudomonadati</taxon>
        <taxon>Pseudomonadota</taxon>
        <taxon>Alphaproteobacteria</taxon>
        <taxon>Hyphomicrobiales</taxon>
        <taxon>Brucellaceae</taxon>
        <taxon>Brucella/Ochrobactrum group</taxon>
        <taxon>Brucella</taxon>
    </lineage>
</organism>
<accession>Q2YMI0</accession>
<name>PSD_BRUA2</name>
<evidence type="ECO:0000255" key="1">
    <source>
        <dbReference type="HAMAP-Rule" id="MF_00664"/>
    </source>
</evidence>